<sequence length="63" mass="6772">MKIFGLFLLIATYMALAFAGEDVCIPSGQKCGPYMNMGCCKGLVCMSYAARCVSMGGIPRMHI</sequence>
<feature type="signal peptide" evidence="3">
    <location>
        <begin position="1"/>
        <end position="19"/>
    </location>
</feature>
<feature type="chain" id="PRO_5025540068" description="U-reduvitoxin-Pr4a" evidence="4">
    <location>
        <begin position="20"/>
        <end position="63"/>
    </location>
</feature>
<feature type="disulfide bond" evidence="1">
    <location>
        <begin position="24"/>
        <end position="40"/>
    </location>
</feature>
<feature type="disulfide bond" evidence="1">
    <location>
        <begin position="31"/>
        <end position="45"/>
    </location>
</feature>
<feature type="disulfide bond" evidence="1">
    <location>
        <begin position="39"/>
        <end position="52"/>
    </location>
</feature>
<dbReference type="EMBL" id="MN208348">
    <property type="protein sequence ID" value="QHB21537.1"/>
    <property type="molecule type" value="mRNA"/>
</dbReference>
<dbReference type="SMR" id="A0A6B9L1H0"/>
<dbReference type="GO" id="GO:0005576">
    <property type="term" value="C:extracellular region"/>
    <property type="evidence" value="ECO:0007669"/>
    <property type="project" value="UniProtKB-SubCell"/>
</dbReference>
<dbReference type="GO" id="GO:0005246">
    <property type="term" value="F:calcium channel regulator activity"/>
    <property type="evidence" value="ECO:0007669"/>
    <property type="project" value="UniProtKB-KW"/>
</dbReference>
<dbReference type="GO" id="GO:0090729">
    <property type="term" value="F:toxin activity"/>
    <property type="evidence" value="ECO:0007669"/>
    <property type="project" value="UniProtKB-KW"/>
</dbReference>
<dbReference type="SUPFAM" id="SSF57059">
    <property type="entry name" value="omega toxin-like"/>
    <property type="match status" value="1"/>
</dbReference>
<evidence type="ECO:0000250" key="1">
    <source>
        <dbReference type="UniProtKB" id="P58606"/>
    </source>
</evidence>
<evidence type="ECO:0000250" key="2">
    <source>
        <dbReference type="UniProtKB" id="P58608"/>
    </source>
</evidence>
<evidence type="ECO:0000255" key="3"/>
<evidence type="ECO:0000269" key="4">
    <source>
    </source>
</evidence>
<evidence type="ECO:0000303" key="5">
    <source>
    </source>
</evidence>
<evidence type="ECO:0000305" key="6"/>
<evidence type="ECO:0000305" key="7">
    <source>
    </source>
</evidence>
<reference key="1">
    <citation type="journal article" date="2019" name="Toxins">
        <title>Missiles of mass disruption: composition and glandular origin of venom used as a projectile defensive weapon by the assassin bug Platymeris rhadamanthus.</title>
        <authorList>
            <person name="Walker A.A."/>
            <person name="Robinson S.D."/>
            <person name="Undheim E.A.B."/>
            <person name="Jin J."/>
            <person name="Han X."/>
            <person name="Fry B.G."/>
            <person name="Vetter I."/>
            <person name="King G.F."/>
        </authorList>
    </citation>
    <scope>NUCLEOTIDE SEQUENCE [MRNA]</scope>
    <scope>MASS SPECTROMETRY</scope>
    <scope>SUBCELLULAR LOCATION</scope>
    <source>
        <tissue>Venom</tissue>
        <tissue>Venom gland</tissue>
    </source>
</reference>
<protein>
    <recommendedName>
        <fullName evidence="5">U-reduvitoxin-Pr4a</fullName>
        <shortName evidence="5">U-RDTX-Pr4a</shortName>
    </recommendedName>
</protein>
<accession>A0A6B9L1H0</accession>
<name>PLK4A_PLARH</name>
<proteinExistence type="evidence at protein level"/>
<keyword id="KW-0108">Calcium channel impairing toxin</keyword>
<keyword id="KW-1015">Disulfide bond</keyword>
<keyword id="KW-0872">Ion channel impairing toxin</keyword>
<keyword id="KW-0960">Knottin</keyword>
<keyword id="KW-0528">Neurotoxin</keyword>
<keyword id="KW-0964">Secreted</keyword>
<keyword id="KW-0732">Signal</keyword>
<keyword id="KW-0800">Toxin</keyword>
<keyword id="KW-1218">Voltage-gated calcium channel impairing toxin</keyword>
<comment type="function">
    <text evidence="2">Binds reversibly and blocks P/Q-type voltage-gated calcium channels (Cav).</text>
</comment>
<comment type="subcellular location">
    <subcellularLocation>
        <location evidence="4">Secreted</location>
    </subcellularLocation>
</comment>
<comment type="tissue specificity">
    <text evidence="7">Expressed by the venom gland.</text>
</comment>
<comment type="domain">
    <text evidence="6">The presence of a 'disulfide through disulfide knot' structurally defines this protein as a knottin.</text>
</comment>
<comment type="mass spectrometry" mass="4264.77" method="MALDI" evidence="4">
    <text>Monoisotopic mass.</text>
</comment>
<comment type="similarity">
    <text evidence="6">Belongs to the venom Ptu1-like knottin family.</text>
</comment>
<organism>
    <name type="scientific">Platymeris rhadamanthus</name>
    <name type="common">Red spot assassin bug</name>
    <dbReference type="NCBI Taxonomy" id="1134088"/>
    <lineage>
        <taxon>Eukaryota</taxon>
        <taxon>Metazoa</taxon>
        <taxon>Ecdysozoa</taxon>
        <taxon>Arthropoda</taxon>
        <taxon>Hexapoda</taxon>
        <taxon>Insecta</taxon>
        <taxon>Pterygota</taxon>
        <taxon>Neoptera</taxon>
        <taxon>Paraneoptera</taxon>
        <taxon>Hemiptera</taxon>
        <taxon>Heteroptera</taxon>
        <taxon>Panheteroptera</taxon>
        <taxon>Cimicomorpha</taxon>
        <taxon>Reduviidae</taxon>
        <taxon>Platymeris</taxon>
    </lineage>
</organism>